<dbReference type="EC" id="1.7.1.7" evidence="1"/>
<dbReference type="EMBL" id="CP000800">
    <property type="protein sequence ID" value="ABV20259.1"/>
    <property type="molecule type" value="Genomic_DNA"/>
</dbReference>
<dbReference type="RefSeq" id="WP_001217331.1">
    <property type="nucleotide sequence ID" value="NC_009801.1"/>
</dbReference>
<dbReference type="SMR" id="A7ZHJ5"/>
<dbReference type="KEGG" id="ecw:EcE24377A_0106"/>
<dbReference type="HOGENOM" id="CLU_022552_5_3_6"/>
<dbReference type="Proteomes" id="UP000001122">
    <property type="component" value="Chromosome"/>
</dbReference>
<dbReference type="GO" id="GO:0005829">
    <property type="term" value="C:cytosol"/>
    <property type="evidence" value="ECO:0007669"/>
    <property type="project" value="TreeGrafter"/>
</dbReference>
<dbReference type="GO" id="GO:1902560">
    <property type="term" value="C:GMP reductase complex"/>
    <property type="evidence" value="ECO:0007669"/>
    <property type="project" value="InterPro"/>
</dbReference>
<dbReference type="GO" id="GO:0003920">
    <property type="term" value="F:GMP reductase activity"/>
    <property type="evidence" value="ECO:0007669"/>
    <property type="project" value="UniProtKB-UniRule"/>
</dbReference>
<dbReference type="GO" id="GO:0046872">
    <property type="term" value="F:metal ion binding"/>
    <property type="evidence" value="ECO:0007669"/>
    <property type="project" value="UniProtKB-KW"/>
</dbReference>
<dbReference type="GO" id="GO:0006163">
    <property type="term" value="P:purine nucleotide metabolic process"/>
    <property type="evidence" value="ECO:0007669"/>
    <property type="project" value="UniProtKB-UniRule"/>
</dbReference>
<dbReference type="CDD" id="cd00381">
    <property type="entry name" value="IMPDH"/>
    <property type="match status" value="1"/>
</dbReference>
<dbReference type="FunFam" id="3.20.20.70:FF:000012">
    <property type="entry name" value="GMP reductase"/>
    <property type="match status" value="1"/>
</dbReference>
<dbReference type="Gene3D" id="3.20.20.70">
    <property type="entry name" value="Aldolase class I"/>
    <property type="match status" value="1"/>
</dbReference>
<dbReference type="HAMAP" id="MF_00596">
    <property type="entry name" value="GMP_reduct_type1"/>
    <property type="match status" value="1"/>
</dbReference>
<dbReference type="InterPro" id="IPR013785">
    <property type="entry name" value="Aldolase_TIM"/>
</dbReference>
<dbReference type="InterPro" id="IPR050139">
    <property type="entry name" value="GMP_reductase"/>
</dbReference>
<dbReference type="InterPro" id="IPR005993">
    <property type="entry name" value="GMPR"/>
</dbReference>
<dbReference type="InterPro" id="IPR015875">
    <property type="entry name" value="IMP_DH/GMP_Rdtase_CS"/>
</dbReference>
<dbReference type="InterPro" id="IPR001093">
    <property type="entry name" value="IMP_DH_GMPRt"/>
</dbReference>
<dbReference type="NCBIfam" id="TIGR01305">
    <property type="entry name" value="GMP_reduct_1"/>
    <property type="match status" value="1"/>
</dbReference>
<dbReference type="NCBIfam" id="NF003470">
    <property type="entry name" value="PRK05096.1"/>
    <property type="match status" value="1"/>
</dbReference>
<dbReference type="PANTHER" id="PTHR43170">
    <property type="entry name" value="GMP REDUCTASE"/>
    <property type="match status" value="1"/>
</dbReference>
<dbReference type="PANTHER" id="PTHR43170:SF5">
    <property type="entry name" value="GMP REDUCTASE"/>
    <property type="match status" value="1"/>
</dbReference>
<dbReference type="Pfam" id="PF00478">
    <property type="entry name" value="IMPDH"/>
    <property type="match status" value="1"/>
</dbReference>
<dbReference type="PIRSF" id="PIRSF000235">
    <property type="entry name" value="GMP_reductase"/>
    <property type="match status" value="1"/>
</dbReference>
<dbReference type="SMART" id="SM01240">
    <property type="entry name" value="IMPDH"/>
    <property type="match status" value="1"/>
</dbReference>
<dbReference type="SUPFAM" id="SSF51412">
    <property type="entry name" value="Inosine monophosphate dehydrogenase (IMPDH)"/>
    <property type="match status" value="1"/>
</dbReference>
<dbReference type="PROSITE" id="PS00487">
    <property type="entry name" value="IMP_DH_GMP_RED"/>
    <property type="match status" value="1"/>
</dbReference>
<proteinExistence type="inferred from homology"/>
<gene>
    <name evidence="1" type="primary">guaC</name>
    <name type="ordered locus">EcE24377A_0106</name>
</gene>
<sequence>MRIEEDLKLGFKDVLIRPKRSTLKSRSDVELERQFTFKHSGQSWSGVPIIAANMDTVGTFSMASALASFDILTAVHKHYSVEEWQAFINNSSADVLKHVMVSTGTSDADFEKTKQILDLNPALNFVCIDVANGYSEHFVQFVAKAREAWPTKTICAGNVVTGEMCEELILSGADIVKVGIGPGSVCTTRVKTGVGYPQLSAVIECADAAHGLGGMIVSDGGCTTPGDVAKAFGGGADFVMLGGMLAGHEESGGRIIEENGEKFMLFYGMSSESAMKRHVGGVAEYRAAEGKTVKLPLRGPVENTARDILGGLRSACTYVGASRLKELTKRTTFIRVQEQENRIFNNL</sequence>
<organism>
    <name type="scientific">Escherichia coli O139:H28 (strain E24377A / ETEC)</name>
    <dbReference type="NCBI Taxonomy" id="331111"/>
    <lineage>
        <taxon>Bacteria</taxon>
        <taxon>Pseudomonadati</taxon>
        <taxon>Pseudomonadota</taxon>
        <taxon>Gammaproteobacteria</taxon>
        <taxon>Enterobacterales</taxon>
        <taxon>Enterobacteriaceae</taxon>
        <taxon>Escherichia</taxon>
    </lineage>
</organism>
<protein>
    <recommendedName>
        <fullName evidence="1">GMP reductase</fullName>
        <ecNumber evidence="1">1.7.1.7</ecNumber>
    </recommendedName>
    <alternativeName>
        <fullName evidence="1">Guanosine 5'-monophosphate oxidoreductase</fullName>
        <shortName evidence="1">Guanosine monophosphate reductase</shortName>
    </alternativeName>
</protein>
<evidence type="ECO:0000255" key="1">
    <source>
        <dbReference type="HAMAP-Rule" id="MF_00596"/>
    </source>
</evidence>
<reference key="1">
    <citation type="journal article" date="2008" name="J. Bacteriol.">
        <title>The pangenome structure of Escherichia coli: comparative genomic analysis of E. coli commensal and pathogenic isolates.</title>
        <authorList>
            <person name="Rasko D.A."/>
            <person name="Rosovitz M.J."/>
            <person name="Myers G.S.A."/>
            <person name="Mongodin E.F."/>
            <person name="Fricke W.F."/>
            <person name="Gajer P."/>
            <person name="Crabtree J."/>
            <person name="Sebaihia M."/>
            <person name="Thomson N.R."/>
            <person name="Chaudhuri R."/>
            <person name="Henderson I.R."/>
            <person name="Sperandio V."/>
            <person name="Ravel J."/>
        </authorList>
    </citation>
    <scope>NUCLEOTIDE SEQUENCE [LARGE SCALE GENOMIC DNA]</scope>
    <source>
        <strain>E24377A / ETEC</strain>
    </source>
</reference>
<name>GUAC_ECO24</name>
<accession>A7ZHJ5</accession>
<keyword id="KW-0479">Metal-binding</keyword>
<keyword id="KW-0521">NADP</keyword>
<keyword id="KW-0560">Oxidoreductase</keyword>
<keyword id="KW-0630">Potassium</keyword>
<keyword id="KW-1185">Reference proteome</keyword>
<feature type="chain" id="PRO_1000061235" description="GMP reductase">
    <location>
        <begin position="1"/>
        <end position="347"/>
    </location>
</feature>
<feature type="active site" description="Thioimidate intermediate" evidence="1">
    <location>
        <position position="186"/>
    </location>
</feature>
<feature type="binding site" evidence="1">
    <location>
        <begin position="108"/>
        <end position="131"/>
    </location>
    <ligand>
        <name>NADP(+)</name>
        <dbReference type="ChEBI" id="CHEBI:58349"/>
    </ligand>
</feature>
<feature type="binding site" evidence="1">
    <location>
        <position position="181"/>
    </location>
    <ligand>
        <name>K(+)</name>
        <dbReference type="ChEBI" id="CHEBI:29103"/>
    </ligand>
</feature>
<feature type="binding site" evidence="1">
    <location>
        <position position="183"/>
    </location>
    <ligand>
        <name>K(+)</name>
        <dbReference type="ChEBI" id="CHEBI:29103"/>
    </ligand>
</feature>
<feature type="binding site" evidence="1">
    <location>
        <begin position="216"/>
        <end position="239"/>
    </location>
    <ligand>
        <name>NADP(+)</name>
        <dbReference type="ChEBI" id="CHEBI:58349"/>
    </ligand>
</feature>
<comment type="function">
    <text evidence="1">Catalyzes the irreversible NADPH-dependent deamination of GMP to IMP. It functions in the conversion of nucleobase, nucleoside and nucleotide derivatives of G to A nucleotides, and in maintaining the intracellular balance of A and G nucleotides.</text>
</comment>
<comment type="catalytic activity">
    <reaction evidence="1">
        <text>IMP + NH4(+) + NADP(+) = GMP + NADPH + 2 H(+)</text>
        <dbReference type="Rhea" id="RHEA:17185"/>
        <dbReference type="ChEBI" id="CHEBI:15378"/>
        <dbReference type="ChEBI" id="CHEBI:28938"/>
        <dbReference type="ChEBI" id="CHEBI:57783"/>
        <dbReference type="ChEBI" id="CHEBI:58053"/>
        <dbReference type="ChEBI" id="CHEBI:58115"/>
        <dbReference type="ChEBI" id="CHEBI:58349"/>
        <dbReference type="EC" id="1.7.1.7"/>
    </reaction>
</comment>
<comment type="subunit">
    <text evidence="1">Homotetramer.</text>
</comment>
<comment type="similarity">
    <text evidence="1">Belongs to the IMPDH/GMPR family. GuaC type 1 subfamily.</text>
</comment>